<evidence type="ECO:0000255" key="1">
    <source>
        <dbReference type="HAMAP-Rule" id="MF_00464"/>
    </source>
</evidence>
<sequence>MGVELAFPKVVGKQVYGSLYDCDENVLKDTKRLEQIIKEAADVGNMNILDIKSWKIGEGVSVVAIILESHITIHTWPEYKFATVDVYSCGPHTSPLKAFNYIVEKLGAKKYTINEADRSSEF</sequence>
<gene>
    <name evidence="1" type="primary">speH</name>
    <name type="ordered locus">M1627_1661</name>
</gene>
<feature type="chain" id="PRO_1000206308" description="S-adenosylmethionine decarboxylase beta chain" evidence="1">
    <location>
        <begin position="1"/>
        <end position="68"/>
    </location>
</feature>
<feature type="chain" id="PRO_1000206309" description="S-adenosylmethionine decarboxylase alpha chain" evidence="1">
    <location>
        <begin position="69"/>
        <end position="122"/>
    </location>
</feature>
<feature type="active site" description="Schiff-base intermediate with substrate; via pyruvic acid" evidence="1">
    <location>
        <position position="69"/>
    </location>
</feature>
<feature type="active site" description="Proton acceptor; for processing activity" evidence="1">
    <location>
        <position position="74"/>
    </location>
</feature>
<feature type="active site" description="Proton donor; for catalytic activity" evidence="1">
    <location>
        <position position="89"/>
    </location>
</feature>
<feature type="site" description="Cleavage (non-hydrolytic); by autolysis" evidence="1">
    <location>
        <begin position="68"/>
        <end position="69"/>
    </location>
</feature>
<feature type="modified residue" description="Pyruvic acid (Ser); by autocatalysis" evidence="1">
    <location>
        <position position="69"/>
    </location>
</feature>
<organism>
    <name type="scientific">Saccharolobus islandicus (strain M.16.27)</name>
    <name type="common">Sulfolobus islandicus</name>
    <dbReference type="NCBI Taxonomy" id="427318"/>
    <lineage>
        <taxon>Archaea</taxon>
        <taxon>Thermoproteota</taxon>
        <taxon>Thermoprotei</taxon>
        <taxon>Sulfolobales</taxon>
        <taxon>Sulfolobaceae</taxon>
        <taxon>Saccharolobus</taxon>
    </lineage>
</organism>
<protein>
    <recommendedName>
        <fullName evidence="1">S-adenosylmethionine decarboxylase proenzyme</fullName>
        <shortName evidence="1">AdoMetDC</shortName>
        <shortName evidence="1">SAMDC</shortName>
        <ecNumber evidence="1">4.1.1.50</ecNumber>
    </recommendedName>
    <component>
        <recommendedName>
            <fullName evidence="1">S-adenosylmethionine decarboxylase beta chain</fullName>
        </recommendedName>
    </component>
    <component>
        <recommendedName>
            <fullName evidence="1">S-adenosylmethionine decarboxylase alpha chain</fullName>
        </recommendedName>
    </component>
</protein>
<proteinExistence type="inferred from homology"/>
<keyword id="KW-0068">Autocatalytic cleavage</keyword>
<keyword id="KW-0210">Decarboxylase</keyword>
<keyword id="KW-0456">Lyase</keyword>
<keyword id="KW-0620">Polyamine biosynthesis</keyword>
<keyword id="KW-0670">Pyruvate</keyword>
<keyword id="KW-0949">S-adenosyl-L-methionine</keyword>
<keyword id="KW-0704">Schiff base</keyword>
<keyword id="KW-0745">Spermidine biosynthesis</keyword>
<keyword id="KW-0865">Zymogen</keyword>
<dbReference type="EC" id="4.1.1.50" evidence="1"/>
<dbReference type="EMBL" id="CP001401">
    <property type="protein sequence ID" value="ACP55540.1"/>
    <property type="molecule type" value="Genomic_DNA"/>
</dbReference>
<dbReference type="SMR" id="C3N6B5"/>
<dbReference type="KEGG" id="sim:M1627_1661"/>
<dbReference type="HOGENOM" id="CLU_125470_2_1_2"/>
<dbReference type="UniPathway" id="UPA00331">
    <property type="reaction ID" value="UER00451"/>
</dbReference>
<dbReference type="Proteomes" id="UP000002307">
    <property type="component" value="Chromosome"/>
</dbReference>
<dbReference type="GO" id="GO:0005829">
    <property type="term" value="C:cytosol"/>
    <property type="evidence" value="ECO:0007669"/>
    <property type="project" value="TreeGrafter"/>
</dbReference>
<dbReference type="GO" id="GO:0004014">
    <property type="term" value="F:adenosylmethionine decarboxylase activity"/>
    <property type="evidence" value="ECO:0007669"/>
    <property type="project" value="UniProtKB-UniRule"/>
</dbReference>
<dbReference type="GO" id="GO:0008295">
    <property type="term" value="P:spermidine biosynthetic process"/>
    <property type="evidence" value="ECO:0007669"/>
    <property type="project" value="UniProtKB-UniRule"/>
</dbReference>
<dbReference type="FunFam" id="3.60.90.10:FF:000005">
    <property type="entry name" value="Arginine decarboxylase proenzyme"/>
    <property type="match status" value="1"/>
</dbReference>
<dbReference type="Gene3D" id="3.60.90.10">
    <property type="entry name" value="S-adenosylmethionine decarboxylase"/>
    <property type="match status" value="1"/>
</dbReference>
<dbReference type="HAMAP" id="MF_00464">
    <property type="entry name" value="AdoMetDC_1"/>
    <property type="match status" value="1"/>
</dbReference>
<dbReference type="InterPro" id="IPR003826">
    <property type="entry name" value="AdoMetDC_fam_prok"/>
</dbReference>
<dbReference type="InterPro" id="IPR016067">
    <property type="entry name" value="S-AdoMet_deCO2ase_core"/>
</dbReference>
<dbReference type="InterPro" id="IPR017716">
    <property type="entry name" value="S-AdoMet_deCOase_pro-enz"/>
</dbReference>
<dbReference type="NCBIfam" id="TIGR03330">
    <property type="entry name" value="SAM_DCase_Bsu"/>
    <property type="match status" value="1"/>
</dbReference>
<dbReference type="PANTHER" id="PTHR33866">
    <property type="entry name" value="S-ADENOSYLMETHIONINE DECARBOXYLASE PROENZYME"/>
    <property type="match status" value="1"/>
</dbReference>
<dbReference type="PANTHER" id="PTHR33866:SF2">
    <property type="entry name" value="S-ADENOSYLMETHIONINE DECARBOXYLASE PROENZYME"/>
    <property type="match status" value="1"/>
</dbReference>
<dbReference type="Pfam" id="PF02675">
    <property type="entry name" value="AdoMet_dc"/>
    <property type="match status" value="1"/>
</dbReference>
<dbReference type="SUPFAM" id="SSF56276">
    <property type="entry name" value="S-adenosylmethionine decarboxylase"/>
    <property type="match status" value="1"/>
</dbReference>
<reference key="1">
    <citation type="journal article" date="2009" name="Proc. Natl. Acad. Sci. U.S.A.">
        <title>Biogeography of the Sulfolobus islandicus pan-genome.</title>
        <authorList>
            <person name="Reno M.L."/>
            <person name="Held N.L."/>
            <person name="Fields C.J."/>
            <person name="Burke P.V."/>
            <person name="Whitaker R.J."/>
        </authorList>
    </citation>
    <scope>NUCLEOTIDE SEQUENCE [LARGE SCALE GENOMIC DNA]</scope>
    <source>
        <strain>M.16.27</strain>
    </source>
</reference>
<name>SPEH_SACI3</name>
<accession>C3N6B5</accession>
<comment type="function">
    <text evidence="1">Catalyzes the decarboxylation of S-adenosylmethionine to S-adenosylmethioninamine (dcAdoMet), the propylamine donor required for the synthesis of the polyamines spermine and spermidine from the diamine putrescine.</text>
</comment>
<comment type="catalytic activity">
    <reaction evidence="1">
        <text>S-adenosyl-L-methionine + H(+) = S-adenosyl 3-(methylsulfanyl)propylamine + CO2</text>
        <dbReference type="Rhea" id="RHEA:15981"/>
        <dbReference type="ChEBI" id="CHEBI:15378"/>
        <dbReference type="ChEBI" id="CHEBI:16526"/>
        <dbReference type="ChEBI" id="CHEBI:57443"/>
        <dbReference type="ChEBI" id="CHEBI:59789"/>
        <dbReference type="EC" id="4.1.1.50"/>
    </reaction>
</comment>
<comment type="cofactor">
    <cofactor evidence="1">
        <name>pyruvate</name>
        <dbReference type="ChEBI" id="CHEBI:15361"/>
    </cofactor>
    <text evidence="1">Binds 1 pyruvoyl group covalently per subunit.</text>
</comment>
<comment type="pathway">
    <text evidence="1">Amine and polyamine biosynthesis; S-adenosylmethioninamine biosynthesis; S-adenosylmethioninamine from S-adenosyl-L-methionine: step 1/1.</text>
</comment>
<comment type="subunit">
    <text evidence="1">Heterotetramer of two alpha and two beta chains arranged as a dimer of alpha/beta heterodimers.</text>
</comment>
<comment type="PTM">
    <text evidence="1">Is synthesized initially as an inactive proenzyme. Formation of the active enzyme involves a self-maturation process in which the active site pyruvoyl group is generated from an internal serine residue via an autocatalytic post-translational modification. Two non-identical subunits are generated from the proenzyme in this reaction, and the pyruvate is formed at the N-terminus of the alpha chain, which is derived from the carboxyl end of the proenzyme. The post-translation cleavage follows an unusual pathway, termed non-hydrolytic serinolysis, in which the side chain hydroxyl group of the serine supplies its oxygen atom to form the C-terminus of the beta chain, while the remainder of the serine residue undergoes an oxidative deamination to produce ammonia and the pyruvoyl group blocking the N-terminus of the alpha chain.</text>
</comment>
<comment type="similarity">
    <text evidence="1">Belongs to the prokaryotic AdoMetDC family. Type 1 subfamily.</text>
</comment>